<proteinExistence type="inferred from homology"/>
<reference key="1">
    <citation type="journal article" date="2005" name="Nucleic Acids Res.">
        <title>Genomic blueprint of Hahella chejuensis, a marine microbe producing an algicidal agent.</title>
        <authorList>
            <person name="Jeong H."/>
            <person name="Yim J.H."/>
            <person name="Lee C."/>
            <person name="Choi S.-H."/>
            <person name="Park Y.K."/>
            <person name="Yoon S.H."/>
            <person name="Hur C.-G."/>
            <person name="Kang H.-Y."/>
            <person name="Kim D."/>
            <person name="Lee H.H."/>
            <person name="Park K.H."/>
            <person name="Park S.-H."/>
            <person name="Park H.-S."/>
            <person name="Lee H.K."/>
            <person name="Oh T.K."/>
            <person name="Kim J.F."/>
        </authorList>
    </citation>
    <scope>NUCLEOTIDE SEQUENCE [LARGE SCALE GENOMIC DNA]</scope>
    <source>
        <strain>KCTC 2396</strain>
    </source>
</reference>
<name>ILVC_HAHCH</name>
<feature type="chain" id="PRO_0000252762" description="Ketol-acid reductoisomerase (NADP(+))">
    <location>
        <begin position="1"/>
        <end position="338"/>
    </location>
</feature>
<feature type="domain" description="KARI N-terminal Rossmann" evidence="2">
    <location>
        <begin position="1"/>
        <end position="181"/>
    </location>
</feature>
<feature type="domain" description="KARI C-terminal knotted" evidence="3">
    <location>
        <begin position="182"/>
        <end position="327"/>
    </location>
</feature>
<feature type="active site" evidence="1">
    <location>
        <position position="107"/>
    </location>
</feature>
<feature type="binding site" evidence="1">
    <location>
        <begin position="24"/>
        <end position="27"/>
    </location>
    <ligand>
        <name>NADP(+)</name>
        <dbReference type="ChEBI" id="CHEBI:58349"/>
    </ligand>
</feature>
<feature type="binding site" evidence="1">
    <location>
        <position position="47"/>
    </location>
    <ligand>
        <name>NADP(+)</name>
        <dbReference type="ChEBI" id="CHEBI:58349"/>
    </ligand>
</feature>
<feature type="binding site" evidence="1">
    <location>
        <position position="50"/>
    </location>
    <ligand>
        <name>NADP(+)</name>
        <dbReference type="ChEBI" id="CHEBI:58349"/>
    </ligand>
</feature>
<feature type="binding site" evidence="1">
    <location>
        <position position="52"/>
    </location>
    <ligand>
        <name>NADP(+)</name>
        <dbReference type="ChEBI" id="CHEBI:58349"/>
    </ligand>
</feature>
<feature type="binding site" evidence="1">
    <location>
        <begin position="82"/>
        <end position="85"/>
    </location>
    <ligand>
        <name>NADP(+)</name>
        <dbReference type="ChEBI" id="CHEBI:58349"/>
    </ligand>
</feature>
<feature type="binding site" evidence="1">
    <location>
        <position position="133"/>
    </location>
    <ligand>
        <name>NADP(+)</name>
        <dbReference type="ChEBI" id="CHEBI:58349"/>
    </ligand>
</feature>
<feature type="binding site" evidence="1">
    <location>
        <position position="190"/>
    </location>
    <ligand>
        <name>Mg(2+)</name>
        <dbReference type="ChEBI" id="CHEBI:18420"/>
        <label>1</label>
    </ligand>
</feature>
<feature type="binding site" evidence="1">
    <location>
        <position position="190"/>
    </location>
    <ligand>
        <name>Mg(2+)</name>
        <dbReference type="ChEBI" id="CHEBI:18420"/>
        <label>2</label>
    </ligand>
</feature>
<feature type="binding site" evidence="1">
    <location>
        <position position="194"/>
    </location>
    <ligand>
        <name>Mg(2+)</name>
        <dbReference type="ChEBI" id="CHEBI:18420"/>
        <label>1</label>
    </ligand>
</feature>
<feature type="binding site" evidence="1">
    <location>
        <position position="226"/>
    </location>
    <ligand>
        <name>Mg(2+)</name>
        <dbReference type="ChEBI" id="CHEBI:18420"/>
        <label>2</label>
    </ligand>
</feature>
<feature type="binding site" evidence="1">
    <location>
        <position position="230"/>
    </location>
    <ligand>
        <name>Mg(2+)</name>
        <dbReference type="ChEBI" id="CHEBI:18420"/>
        <label>2</label>
    </ligand>
</feature>
<feature type="binding site" evidence="1">
    <location>
        <position position="251"/>
    </location>
    <ligand>
        <name>substrate</name>
    </ligand>
</feature>
<protein>
    <recommendedName>
        <fullName evidence="1">Ketol-acid reductoisomerase (NADP(+))</fullName>
        <shortName evidence="1">KARI</shortName>
        <ecNumber evidence="1">1.1.1.86</ecNumber>
    </recommendedName>
    <alternativeName>
        <fullName evidence="1">Acetohydroxy-acid isomeroreductase</fullName>
        <shortName evidence="1">AHIR</shortName>
    </alternativeName>
    <alternativeName>
        <fullName evidence="1">Alpha-keto-beta-hydroxylacyl reductoisomerase</fullName>
    </alternativeName>
    <alternativeName>
        <fullName evidence="1">Ketol-acid reductoisomerase type 1</fullName>
    </alternativeName>
    <alternativeName>
        <fullName evidence="1">Ketol-acid reductoisomerase type I</fullName>
    </alternativeName>
</protein>
<evidence type="ECO:0000255" key="1">
    <source>
        <dbReference type="HAMAP-Rule" id="MF_00435"/>
    </source>
</evidence>
<evidence type="ECO:0000255" key="2">
    <source>
        <dbReference type="PROSITE-ProRule" id="PRU01197"/>
    </source>
</evidence>
<evidence type="ECO:0000255" key="3">
    <source>
        <dbReference type="PROSITE-ProRule" id="PRU01198"/>
    </source>
</evidence>
<keyword id="KW-0028">Amino-acid biosynthesis</keyword>
<keyword id="KW-0100">Branched-chain amino acid biosynthesis</keyword>
<keyword id="KW-0460">Magnesium</keyword>
<keyword id="KW-0479">Metal-binding</keyword>
<keyword id="KW-0521">NADP</keyword>
<keyword id="KW-0560">Oxidoreductase</keyword>
<keyword id="KW-1185">Reference proteome</keyword>
<dbReference type="EC" id="1.1.1.86" evidence="1"/>
<dbReference type="EMBL" id="CP000155">
    <property type="protein sequence ID" value="ABC32565.1"/>
    <property type="molecule type" value="Genomic_DNA"/>
</dbReference>
<dbReference type="RefSeq" id="WP_011399623.1">
    <property type="nucleotide sequence ID" value="NC_007645.1"/>
</dbReference>
<dbReference type="SMR" id="Q2S9V9"/>
<dbReference type="STRING" id="349521.HCH_05914"/>
<dbReference type="KEGG" id="hch:HCH_05914"/>
<dbReference type="eggNOG" id="COG0059">
    <property type="taxonomic scope" value="Bacteria"/>
</dbReference>
<dbReference type="HOGENOM" id="CLU_033821_0_1_6"/>
<dbReference type="OrthoDB" id="9804088at2"/>
<dbReference type="UniPathway" id="UPA00047">
    <property type="reaction ID" value="UER00056"/>
</dbReference>
<dbReference type="UniPathway" id="UPA00049">
    <property type="reaction ID" value="UER00060"/>
</dbReference>
<dbReference type="Proteomes" id="UP000000238">
    <property type="component" value="Chromosome"/>
</dbReference>
<dbReference type="GO" id="GO:0005829">
    <property type="term" value="C:cytosol"/>
    <property type="evidence" value="ECO:0007669"/>
    <property type="project" value="TreeGrafter"/>
</dbReference>
<dbReference type="GO" id="GO:0004455">
    <property type="term" value="F:ketol-acid reductoisomerase activity"/>
    <property type="evidence" value="ECO:0007669"/>
    <property type="project" value="UniProtKB-UniRule"/>
</dbReference>
<dbReference type="GO" id="GO:0000287">
    <property type="term" value="F:magnesium ion binding"/>
    <property type="evidence" value="ECO:0007669"/>
    <property type="project" value="UniProtKB-UniRule"/>
</dbReference>
<dbReference type="GO" id="GO:0050661">
    <property type="term" value="F:NADP binding"/>
    <property type="evidence" value="ECO:0007669"/>
    <property type="project" value="InterPro"/>
</dbReference>
<dbReference type="GO" id="GO:0009097">
    <property type="term" value="P:isoleucine biosynthetic process"/>
    <property type="evidence" value="ECO:0007669"/>
    <property type="project" value="UniProtKB-UniRule"/>
</dbReference>
<dbReference type="GO" id="GO:0009099">
    <property type="term" value="P:L-valine biosynthetic process"/>
    <property type="evidence" value="ECO:0007669"/>
    <property type="project" value="UniProtKB-UniRule"/>
</dbReference>
<dbReference type="FunFam" id="3.40.50.720:FF:000023">
    <property type="entry name" value="Ketol-acid reductoisomerase (NADP(+))"/>
    <property type="match status" value="1"/>
</dbReference>
<dbReference type="Gene3D" id="6.10.240.10">
    <property type="match status" value="1"/>
</dbReference>
<dbReference type="Gene3D" id="3.40.50.720">
    <property type="entry name" value="NAD(P)-binding Rossmann-like Domain"/>
    <property type="match status" value="1"/>
</dbReference>
<dbReference type="HAMAP" id="MF_00435">
    <property type="entry name" value="IlvC"/>
    <property type="match status" value="1"/>
</dbReference>
<dbReference type="InterPro" id="IPR008927">
    <property type="entry name" value="6-PGluconate_DH-like_C_sf"/>
</dbReference>
<dbReference type="InterPro" id="IPR013023">
    <property type="entry name" value="KARI"/>
</dbReference>
<dbReference type="InterPro" id="IPR000506">
    <property type="entry name" value="KARI_C"/>
</dbReference>
<dbReference type="InterPro" id="IPR013116">
    <property type="entry name" value="KARI_N"/>
</dbReference>
<dbReference type="InterPro" id="IPR014359">
    <property type="entry name" value="KARI_prok"/>
</dbReference>
<dbReference type="InterPro" id="IPR036291">
    <property type="entry name" value="NAD(P)-bd_dom_sf"/>
</dbReference>
<dbReference type="NCBIfam" id="TIGR00465">
    <property type="entry name" value="ilvC"/>
    <property type="match status" value="1"/>
</dbReference>
<dbReference type="NCBIfam" id="NF004017">
    <property type="entry name" value="PRK05479.1"/>
    <property type="match status" value="1"/>
</dbReference>
<dbReference type="NCBIfam" id="NF009940">
    <property type="entry name" value="PRK13403.1"/>
    <property type="match status" value="1"/>
</dbReference>
<dbReference type="PANTHER" id="PTHR21371">
    <property type="entry name" value="KETOL-ACID REDUCTOISOMERASE, MITOCHONDRIAL"/>
    <property type="match status" value="1"/>
</dbReference>
<dbReference type="PANTHER" id="PTHR21371:SF1">
    <property type="entry name" value="KETOL-ACID REDUCTOISOMERASE, MITOCHONDRIAL"/>
    <property type="match status" value="1"/>
</dbReference>
<dbReference type="Pfam" id="PF01450">
    <property type="entry name" value="KARI_C"/>
    <property type="match status" value="1"/>
</dbReference>
<dbReference type="Pfam" id="PF07991">
    <property type="entry name" value="KARI_N"/>
    <property type="match status" value="1"/>
</dbReference>
<dbReference type="PIRSF" id="PIRSF000116">
    <property type="entry name" value="IlvC_gammaproteo"/>
    <property type="match status" value="1"/>
</dbReference>
<dbReference type="SUPFAM" id="SSF48179">
    <property type="entry name" value="6-phosphogluconate dehydrogenase C-terminal domain-like"/>
    <property type="match status" value="1"/>
</dbReference>
<dbReference type="SUPFAM" id="SSF51735">
    <property type="entry name" value="NAD(P)-binding Rossmann-fold domains"/>
    <property type="match status" value="1"/>
</dbReference>
<dbReference type="PROSITE" id="PS51851">
    <property type="entry name" value="KARI_C"/>
    <property type="match status" value="1"/>
</dbReference>
<dbReference type="PROSITE" id="PS51850">
    <property type="entry name" value="KARI_N"/>
    <property type="match status" value="1"/>
</dbReference>
<accession>Q2S9V9</accession>
<sequence length="338" mass="36411">MQVYYDKDCDLSIIQGKKVAIIGYGSQGHAHANNLKDSGVDVCVGLRKGSGSWAKAENAGLAVKEVAEAVAGADVVMILTPDEFQAQLYKSEIEPNLKSGATLAFAHGFSIHYNQIVPRADLDVIMIAPKAPGHTVRSEFVKGGGIPDLIAIFQDASGSAKDLALSYASGVGGGRTGIIETTFKDETETDLFGEQAVLCGGAVELVKAGFETLVEAGYAPEMAYFECLHELKLIVDLMYEGGIANMNYSISNNAEYGEYVTGPEVINDQSRAAMRNALKRIQDGEYAKMFIAEGAHNYPSMTAYRRNNAAHPIEQVGEKLRSMMPWIASNKIVDKSKN</sequence>
<organism>
    <name type="scientific">Hahella chejuensis (strain KCTC 2396)</name>
    <dbReference type="NCBI Taxonomy" id="349521"/>
    <lineage>
        <taxon>Bacteria</taxon>
        <taxon>Pseudomonadati</taxon>
        <taxon>Pseudomonadota</taxon>
        <taxon>Gammaproteobacteria</taxon>
        <taxon>Oceanospirillales</taxon>
        <taxon>Hahellaceae</taxon>
        <taxon>Hahella</taxon>
    </lineage>
</organism>
<comment type="function">
    <text evidence="1">Involved in the biosynthesis of branched-chain amino acids (BCAA). Catalyzes an alkyl-migration followed by a ketol-acid reduction of (S)-2-acetolactate (S2AL) to yield (R)-2,3-dihydroxy-isovalerate. In the isomerase reaction, S2AL is rearranged via a Mg-dependent methyl migration to produce 3-hydroxy-3-methyl-2-ketobutyrate (HMKB). In the reductase reaction, this 2-ketoacid undergoes a metal-dependent reduction by NADPH to yield (R)-2,3-dihydroxy-isovalerate.</text>
</comment>
<comment type="catalytic activity">
    <reaction evidence="1">
        <text>(2R)-2,3-dihydroxy-3-methylbutanoate + NADP(+) = (2S)-2-acetolactate + NADPH + H(+)</text>
        <dbReference type="Rhea" id="RHEA:22068"/>
        <dbReference type="ChEBI" id="CHEBI:15378"/>
        <dbReference type="ChEBI" id="CHEBI:49072"/>
        <dbReference type="ChEBI" id="CHEBI:57783"/>
        <dbReference type="ChEBI" id="CHEBI:58349"/>
        <dbReference type="ChEBI" id="CHEBI:58476"/>
        <dbReference type="EC" id="1.1.1.86"/>
    </reaction>
</comment>
<comment type="catalytic activity">
    <reaction evidence="1">
        <text>(2R,3R)-2,3-dihydroxy-3-methylpentanoate + NADP(+) = (S)-2-ethyl-2-hydroxy-3-oxobutanoate + NADPH + H(+)</text>
        <dbReference type="Rhea" id="RHEA:13493"/>
        <dbReference type="ChEBI" id="CHEBI:15378"/>
        <dbReference type="ChEBI" id="CHEBI:49256"/>
        <dbReference type="ChEBI" id="CHEBI:49258"/>
        <dbReference type="ChEBI" id="CHEBI:57783"/>
        <dbReference type="ChEBI" id="CHEBI:58349"/>
        <dbReference type="EC" id="1.1.1.86"/>
    </reaction>
</comment>
<comment type="cofactor">
    <cofactor evidence="1">
        <name>Mg(2+)</name>
        <dbReference type="ChEBI" id="CHEBI:18420"/>
    </cofactor>
    <text evidence="1">Binds 2 magnesium ions per subunit.</text>
</comment>
<comment type="pathway">
    <text evidence="1">Amino-acid biosynthesis; L-isoleucine biosynthesis; L-isoleucine from 2-oxobutanoate: step 2/4.</text>
</comment>
<comment type="pathway">
    <text evidence="1">Amino-acid biosynthesis; L-valine biosynthesis; L-valine from pyruvate: step 2/4.</text>
</comment>
<comment type="similarity">
    <text evidence="1">Belongs to the ketol-acid reductoisomerase family.</text>
</comment>
<gene>
    <name evidence="1" type="primary">ilvC</name>
    <name type="ordered locus">HCH_05914</name>
</gene>